<protein>
    <recommendedName>
        <fullName evidence="1">Glycerol-3-phosphate acyltransferase</fullName>
    </recommendedName>
    <alternativeName>
        <fullName evidence="1">Acyl-PO4 G3P acyltransferase</fullName>
    </alternativeName>
    <alternativeName>
        <fullName evidence="1">Acyl-phosphate--glycerol-3-phosphate acyltransferase</fullName>
    </alternativeName>
    <alternativeName>
        <fullName evidence="1">G3P acyltransferase</fullName>
        <shortName evidence="1">GPAT</shortName>
        <ecNumber evidence="1">2.3.1.275</ecNumber>
    </alternativeName>
    <alternativeName>
        <fullName evidence="1">Lysophosphatidic acid synthase</fullName>
        <shortName evidence="1">LPA synthase</shortName>
    </alternativeName>
</protein>
<reference key="1">
    <citation type="journal article" date="2016" name="Genome Announc.">
        <title>Complete genome sequence of Alkaliphilus metalliredigens strain QYMF, an alkaliphilic and metal-reducing bacterium isolated from borax-contaminated leachate ponds.</title>
        <authorList>
            <person name="Hwang C."/>
            <person name="Copeland A."/>
            <person name="Lucas S."/>
            <person name="Lapidus A."/>
            <person name="Barry K."/>
            <person name="Detter J.C."/>
            <person name="Glavina Del Rio T."/>
            <person name="Hammon N."/>
            <person name="Israni S."/>
            <person name="Dalin E."/>
            <person name="Tice H."/>
            <person name="Pitluck S."/>
            <person name="Chertkov O."/>
            <person name="Brettin T."/>
            <person name="Bruce D."/>
            <person name="Han C."/>
            <person name="Schmutz J."/>
            <person name="Larimer F."/>
            <person name="Land M.L."/>
            <person name="Hauser L."/>
            <person name="Kyrpides N."/>
            <person name="Mikhailova N."/>
            <person name="Ye Q."/>
            <person name="Zhou J."/>
            <person name="Richardson P."/>
            <person name="Fields M.W."/>
        </authorList>
    </citation>
    <scope>NUCLEOTIDE SEQUENCE [LARGE SCALE GENOMIC DNA]</scope>
    <source>
        <strain>QYMF</strain>
    </source>
</reference>
<dbReference type="EC" id="2.3.1.275" evidence="1"/>
<dbReference type="EMBL" id="CP000724">
    <property type="protein sequence ID" value="ABR49006.1"/>
    <property type="molecule type" value="Genomic_DNA"/>
</dbReference>
<dbReference type="RefSeq" id="WP_012063974.1">
    <property type="nucleotide sequence ID" value="NC_009633.1"/>
</dbReference>
<dbReference type="SMR" id="A6TS38"/>
<dbReference type="STRING" id="293826.Amet_2856"/>
<dbReference type="KEGG" id="amt:Amet_2856"/>
<dbReference type="eggNOG" id="COG0344">
    <property type="taxonomic scope" value="Bacteria"/>
</dbReference>
<dbReference type="HOGENOM" id="CLU_081254_4_0_9"/>
<dbReference type="OrthoDB" id="9777124at2"/>
<dbReference type="UniPathway" id="UPA00085"/>
<dbReference type="Proteomes" id="UP000001572">
    <property type="component" value="Chromosome"/>
</dbReference>
<dbReference type="GO" id="GO:0005886">
    <property type="term" value="C:plasma membrane"/>
    <property type="evidence" value="ECO:0007669"/>
    <property type="project" value="UniProtKB-SubCell"/>
</dbReference>
<dbReference type="GO" id="GO:0043772">
    <property type="term" value="F:acyl-phosphate glycerol-3-phosphate acyltransferase activity"/>
    <property type="evidence" value="ECO:0007669"/>
    <property type="project" value="UniProtKB-UniRule"/>
</dbReference>
<dbReference type="GO" id="GO:0008654">
    <property type="term" value="P:phospholipid biosynthetic process"/>
    <property type="evidence" value="ECO:0007669"/>
    <property type="project" value="UniProtKB-UniRule"/>
</dbReference>
<dbReference type="HAMAP" id="MF_01043">
    <property type="entry name" value="PlsY"/>
    <property type="match status" value="1"/>
</dbReference>
<dbReference type="InterPro" id="IPR003811">
    <property type="entry name" value="G3P_acylTferase_PlsY"/>
</dbReference>
<dbReference type="NCBIfam" id="TIGR00023">
    <property type="entry name" value="glycerol-3-phosphate 1-O-acyltransferase PlsY"/>
    <property type="match status" value="1"/>
</dbReference>
<dbReference type="PANTHER" id="PTHR30309:SF0">
    <property type="entry name" value="GLYCEROL-3-PHOSPHATE ACYLTRANSFERASE-RELATED"/>
    <property type="match status" value="1"/>
</dbReference>
<dbReference type="PANTHER" id="PTHR30309">
    <property type="entry name" value="INNER MEMBRANE PROTEIN YGIH"/>
    <property type="match status" value="1"/>
</dbReference>
<dbReference type="Pfam" id="PF02660">
    <property type="entry name" value="G3P_acyltransf"/>
    <property type="match status" value="1"/>
</dbReference>
<dbReference type="SMART" id="SM01207">
    <property type="entry name" value="G3P_acyltransf"/>
    <property type="match status" value="1"/>
</dbReference>
<sequence>MINLLVIISAYFIGNFSTSFIVGKLTSNIDIRQHGSGNAGSTNVLRTLGVKAAALTFLGDTLKGMLSFYLAQRFVGEQAALMAGIAVVIGHNWPVLLGFKGGKGIATTIGVALIASPLAAIASISLGVVILYRYKYVSLSSITAMTILPFFLFSYGLEYFIFGLVLSVMAIYRHRENIKRLRTGTEKKIGRKTSV</sequence>
<keyword id="KW-1003">Cell membrane</keyword>
<keyword id="KW-0444">Lipid biosynthesis</keyword>
<keyword id="KW-0443">Lipid metabolism</keyword>
<keyword id="KW-0472">Membrane</keyword>
<keyword id="KW-0594">Phospholipid biosynthesis</keyword>
<keyword id="KW-1208">Phospholipid metabolism</keyword>
<keyword id="KW-1185">Reference proteome</keyword>
<keyword id="KW-0808">Transferase</keyword>
<keyword id="KW-0812">Transmembrane</keyword>
<keyword id="KW-1133">Transmembrane helix</keyword>
<feature type="chain" id="PRO_1000136062" description="Glycerol-3-phosphate acyltransferase">
    <location>
        <begin position="1"/>
        <end position="195"/>
    </location>
</feature>
<feature type="transmembrane region" description="Helical" evidence="1">
    <location>
        <begin position="2"/>
        <end position="22"/>
    </location>
</feature>
<feature type="transmembrane region" description="Helical" evidence="1">
    <location>
        <begin position="79"/>
        <end position="99"/>
    </location>
</feature>
<feature type="transmembrane region" description="Helical" evidence="1">
    <location>
        <begin position="111"/>
        <end position="131"/>
    </location>
</feature>
<feature type="transmembrane region" description="Helical" evidence="1">
    <location>
        <begin position="146"/>
        <end position="166"/>
    </location>
</feature>
<gene>
    <name evidence="1" type="primary">plsY</name>
    <name type="ordered locus">Amet_2856</name>
</gene>
<organism>
    <name type="scientific">Alkaliphilus metalliredigens (strain QYMF)</name>
    <dbReference type="NCBI Taxonomy" id="293826"/>
    <lineage>
        <taxon>Bacteria</taxon>
        <taxon>Bacillati</taxon>
        <taxon>Bacillota</taxon>
        <taxon>Clostridia</taxon>
        <taxon>Peptostreptococcales</taxon>
        <taxon>Natronincolaceae</taxon>
        <taxon>Alkaliphilus</taxon>
    </lineage>
</organism>
<name>PLSY_ALKMQ</name>
<proteinExistence type="inferred from homology"/>
<evidence type="ECO:0000255" key="1">
    <source>
        <dbReference type="HAMAP-Rule" id="MF_01043"/>
    </source>
</evidence>
<accession>A6TS38</accession>
<comment type="function">
    <text evidence="1">Catalyzes the transfer of an acyl group from acyl-phosphate (acyl-PO(4)) to glycerol-3-phosphate (G3P) to form lysophosphatidic acid (LPA). This enzyme utilizes acyl-phosphate as fatty acyl donor, but not acyl-CoA or acyl-ACP.</text>
</comment>
<comment type="catalytic activity">
    <reaction evidence="1">
        <text>an acyl phosphate + sn-glycerol 3-phosphate = a 1-acyl-sn-glycero-3-phosphate + phosphate</text>
        <dbReference type="Rhea" id="RHEA:34075"/>
        <dbReference type="ChEBI" id="CHEBI:43474"/>
        <dbReference type="ChEBI" id="CHEBI:57597"/>
        <dbReference type="ChEBI" id="CHEBI:57970"/>
        <dbReference type="ChEBI" id="CHEBI:59918"/>
        <dbReference type="EC" id="2.3.1.275"/>
    </reaction>
</comment>
<comment type="pathway">
    <text evidence="1">Lipid metabolism; phospholipid metabolism.</text>
</comment>
<comment type="subunit">
    <text evidence="1">Probably interacts with PlsX.</text>
</comment>
<comment type="subcellular location">
    <subcellularLocation>
        <location evidence="1">Cell membrane</location>
        <topology evidence="1">Multi-pass membrane protein</topology>
    </subcellularLocation>
</comment>
<comment type="similarity">
    <text evidence="1">Belongs to the PlsY family.</text>
</comment>